<evidence type="ECO:0000250" key="1"/>
<evidence type="ECO:0000255" key="2">
    <source>
        <dbReference type="PROSITE-ProRule" id="PRU01019"/>
    </source>
</evidence>
<organism>
    <name type="scientific">Mycobacterium avium (strain 104)</name>
    <dbReference type="NCBI Taxonomy" id="243243"/>
    <lineage>
        <taxon>Bacteria</taxon>
        <taxon>Bacillati</taxon>
        <taxon>Actinomycetota</taxon>
        <taxon>Actinomycetes</taxon>
        <taxon>Mycobacteriales</taxon>
        <taxon>Mycobacteriaceae</taxon>
        <taxon>Mycobacterium</taxon>
        <taxon>Mycobacterium avium complex (MAC)</taxon>
    </lineage>
</organism>
<proteinExistence type="inferred from homology"/>
<feature type="chain" id="PRO_0000380091" description="Putative O-methyltransferase MAV_1364">
    <location>
        <begin position="1"/>
        <end position="222"/>
    </location>
</feature>
<feature type="binding site" evidence="2">
    <location>
        <position position="49"/>
    </location>
    <ligand>
        <name>S-adenosyl-L-methionine</name>
        <dbReference type="ChEBI" id="CHEBI:59789"/>
    </ligand>
</feature>
<feature type="binding site" evidence="2">
    <location>
        <position position="71"/>
    </location>
    <ligand>
        <name>S-adenosyl-L-methionine</name>
        <dbReference type="ChEBI" id="CHEBI:59789"/>
    </ligand>
</feature>
<feature type="binding site" evidence="2">
    <location>
        <begin position="73"/>
        <end position="74"/>
    </location>
    <ligand>
        <name>S-adenosyl-L-methionine</name>
        <dbReference type="ChEBI" id="CHEBI:59789"/>
    </ligand>
</feature>
<feature type="binding site" evidence="2">
    <location>
        <position position="79"/>
    </location>
    <ligand>
        <name>S-adenosyl-L-methionine</name>
        <dbReference type="ChEBI" id="CHEBI:59789"/>
    </ligand>
</feature>
<feature type="binding site" evidence="2">
    <location>
        <position position="97"/>
    </location>
    <ligand>
        <name>S-adenosyl-L-methionine</name>
        <dbReference type="ChEBI" id="CHEBI:59789"/>
    </ligand>
</feature>
<feature type="binding site" evidence="2">
    <location>
        <position position="98"/>
    </location>
    <ligand>
        <name>S-adenosyl-L-methionine</name>
        <dbReference type="ChEBI" id="CHEBI:59789"/>
    </ligand>
</feature>
<feature type="binding site" evidence="1">
    <location>
        <position position="145"/>
    </location>
    <ligand>
        <name>substrate</name>
    </ligand>
</feature>
<feature type="binding site" evidence="2">
    <location>
        <position position="147"/>
    </location>
    <ligand>
        <name>S-adenosyl-L-methionine</name>
        <dbReference type="ChEBI" id="CHEBI:59789"/>
    </ligand>
</feature>
<name>Y1364_MYCA1</name>
<dbReference type="EC" id="2.1.1.-"/>
<dbReference type="EMBL" id="CP000479">
    <property type="protein sequence ID" value="ABK65048.1"/>
    <property type="molecule type" value="Genomic_DNA"/>
</dbReference>
<dbReference type="RefSeq" id="WP_003875521.1">
    <property type="nucleotide sequence ID" value="NC_008595.1"/>
</dbReference>
<dbReference type="SMR" id="A0QCH0"/>
<dbReference type="KEGG" id="mav:MAV_1364"/>
<dbReference type="HOGENOM" id="CLU_067676_2_0_11"/>
<dbReference type="Proteomes" id="UP000001574">
    <property type="component" value="Chromosome"/>
</dbReference>
<dbReference type="GO" id="GO:0008171">
    <property type="term" value="F:O-methyltransferase activity"/>
    <property type="evidence" value="ECO:0007669"/>
    <property type="project" value="InterPro"/>
</dbReference>
<dbReference type="GO" id="GO:0008757">
    <property type="term" value="F:S-adenosylmethionine-dependent methyltransferase activity"/>
    <property type="evidence" value="ECO:0007669"/>
    <property type="project" value="TreeGrafter"/>
</dbReference>
<dbReference type="GO" id="GO:0032259">
    <property type="term" value="P:methylation"/>
    <property type="evidence" value="ECO:0007669"/>
    <property type="project" value="UniProtKB-KW"/>
</dbReference>
<dbReference type="CDD" id="cd02440">
    <property type="entry name" value="AdoMet_MTases"/>
    <property type="match status" value="1"/>
</dbReference>
<dbReference type="Gene3D" id="3.40.50.150">
    <property type="entry name" value="Vaccinia Virus protein VP39"/>
    <property type="match status" value="1"/>
</dbReference>
<dbReference type="InterPro" id="IPR050362">
    <property type="entry name" value="Cation-dep_OMT"/>
</dbReference>
<dbReference type="InterPro" id="IPR029063">
    <property type="entry name" value="SAM-dependent_MTases_sf"/>
</dbReference>
<dbReference type="InterPro" id="IPR002935">
    <property type="entry name" value="SAM_O-MeTrfase"/>
</dbReference>
<dbReference type="PANTHER" id="PTHR10509:SF85">
    <property type="entry name" value="O-METHYLTRANSFERASE RV1220C-RELATED"/>
    <property type="match status" value="1"/>
</dbReference>
<dbReference type="PANTHER" id="PTHR10509">
    <property type="entry name" value="O-METHYLTRANSFERASE-RELATED"/>
    <property type="match status" value="1"/>
</dbReference>
<dbReference type="Pfam" id="PF01596">
    <property type="entry name" value="Methyltransf_3"/>
    <property type="match status" value="1"/>
</dbReference>
<dbReference type="SUPFAM" id="SSF53335">
    <property type="entry name" value="S-adenosyl-L-methionine-dependent methyltransferases"/>
    <property type="match status" value="1"/>
</dbReference>
<dbReference type="PROSITE" id="PS51682">
    <property type="entry name" value="SAM_OMT_I"/>
    <property type="match status" value="1"/>
</dbReference>
<sequence length="222" mass="22733">MDGTDAEAPGQTAPSRAESLVAHAEASISEDALLAAARERAVDIGAGAVTPAVGALLSLLTKLSGGKAIAEVGTGAGVSGLWLLSGMSDDGVLTTIDIEPEYLRLAKQAFAEAGIGPSRTRLIGGRAQEVLTRLADESYDLVFIDADPIDQPDYVVEGVRLLRPGGVIVVHRAALGGRAGDPAARDAEVVAVREAARLIAEDERLTPALVPLGDGILAAVRD</sequence>
<comment type="similarity">
    <text evidence="2">Belongs to the class I-like SAM-binding methyltransferase superfamily. Cation-dependent O-methyltransferase family.</text>
</comment>
<protein>
    <recommendedName>
        <fullName>Putative O-methyltransferase MAV_1364</fullName>
        <ecNumber>2.1.1.-</ecNumber>
    </recommendedName>
</protein>
<accession>A0QCH0</accession>
<reference key="1">
    <citation type="submission" date="2006-10" db="EMBL/GenBank/DDBJ databases">
        <authorList>
            <person name="Fleischmann R.D."/>
            <person name="Dodson R.J."/>
            <person name="Haft D.H."/>
            <person name="Merkel J.S."/>
            <person name="Nelson W.C."/>
            <person name="Fraser C.M."/>
        </authorList>
    </citation>
    <scope>NUCLEOTIDE SEQUENCE [LARGE SCALE GENOMIC DNA]</scope>
    <source>
        <strain>104</strain>
    </source>
</reference>
<keyword id="KW-0489">Methyltransferase</keyword>
<keyword id="KW-0949">S-adenosyl-L-methionine</keyword>
<keyword id="KW-0808">Transferase</keyword>
<gene>
    <name type="ordered locus">MAV_1364</name>
</gene>